<accession>Q9NB21</accession>
<accession>B0WHH0</accession>
<gene>
    <name type="primary">RpS7</name>
    <name type="ORF">CPIJ006763</name>
</gene>
<reference key="1">
    <citation type="submission" date="2000-05" db="EMBL/GenBank/DDBJ databases">
        <title>Isolation of S7 ribosomal protein mRNA from Culex quinquefasciatus.</title>
        <authorList>
            <person name="Hawkes N.J."/>
            <person name="Hemingway J."/>
        </authorList>
    </citation>
    <scope>NUCLEOTIDE SEQUENCE [MRNA]</scope>
    <source>
        <strain>PelSS</strain>
        <tissue>Larva</tissue>
    </source>
</reference>
<reference key="2">
    <citation type="submission" date="2007-03" db="EMBL/GenBank/DDBJ databases">
        <title>Annotation of Culex pipiens quinquefasciatus.</title>
        <authorList>
            <consortium name="The Broad Institute Genome Sequencing Platform"/>
            <person name="Atkinson P.W."/>
            <person name="Hemingway J."/>
            <person name="Christensen B.M."/>
            <person name="Higgs S."/>
            <person name="Kodira C.D."/>
            <person name="Hannick L.I."/>
            <person name="Megy K."/>
            <person name="O'Leary S.B."/>
            <person name="Pearson M."/>
            <person name="Haas B.J."/>
            <person name="Mauceli E."/>
            <person name="Wortman J.R."/>
            <person name="Lee N.H."/>
            <person name="Guigo R."/>
            <person name="Stanke M."/>
            <person name="Alvarado L."/>
            <person name="Amedeo P."/>
            <person name="Antoine C.H."/>
            <person name="Arensburger P."/>
            <person name="Bidwell S.L."/>
            <person name="Crawford M."/>
            <person name="Camaro F."/>
            <person name="Devon K."/>
            <person name="Engels R."/>
            <person name="Hammond M."/>
            <person name="Howarth C."/>
            <person name="Koehrsen M."/>
            <person name="Lawson D."/>
            <person name="Montgomery P."/>
            <person name="Nene V."/>
            <person name="Nusbaum C."/>
            <person name="Puiu D."/>
            <person name="Romero-Severson J."/>
            <person name="Severson D.W."/>
            <person name="Shumway M."/>
            <person name="Sisk P."/>
            <person name="Stolte C."/>
            <person name="Zeng Q."/>
            <person name="Eisenstadt E."/>
            <person name="Fraser-Liggett C.M."/>
            <person name="Strausberg R."/>
            <person name="Galagan J."/>
            <person name="Birren B."/>
            <person name="Collins F.H."/>
        </authorList>
    </citation>
    <scope>NUCLEOTIDE SEQUENCE [LARGE SCALE GENOMIC DNA]</scope>
    <source>
        <strain>JHB</strain>
    </source>
</reference>
<name>RS7_CULQU</name>
<keyword id="KW-1185">Reference proteome</keyword>
<keyword id="KW-0687">Ribonucleoprotein</keyword>
<keyword id="KW-0689">Ribosomal protein</keyword>
<evidence type="ECO:0000305" key="1"/>
<protein>
    <recommendedName>
        <fullName evidence="1">Small ribosomal subunit protein eS7</fullName>
    </recommendedName>
    <alternativeName>
        <fullName>40S ribosomal protein S7</fullName>
    </alternativeName>
</protein>
<proteinExistence type="evidence at transcript level"/>
<sequence length="192" mass="22105">MVFGSKVIKSGGAEPDAFEGQIGQAILELEMNSDLKPQLRDLHITRAREIEFNNKKAIVIYVPVPKQKAFQKVQTRLVRELEKKFSGKHVVFIGERRILPKPQRGRRDPNKQKRPRSRTLTAVYDAILEDLVFPAEVVGKRIRVKLDGSQLIKVHLDKNQQTTIEHKVDTFTSVYKKLTGRDVTFEFPEPYL</sequence>
<dbReference type="EMBL" id="AF272670">
    <property type="protein sequence ID" value="AAF81792.1"/>
    <property type="molecule type" value="mRNA"/>
</dbReference>
<dbReference type="EMBL" id="DS231936">
    <property type="protein sequence ID" value="EDS27748.1"/>
    <property type="molecule type" value="Genomic_DNA"/>
</dbReference>
<dbReference type="SMR" id="Q9NB21"/>
<dbReference type="FunCoup" id="Q9NB21">
    <property type="interactions" value="1884"/>
</dbReference>
<dbReference type="STRING" id="7176.Q9NB21"/>
<dbReference type="EnsemblMetazoa" id="CPIJ006763-RA">
    <property type="protein sequence ID" value="CPIJ006763-PA"/>
    <property type="gene ID" value="CPIJ006763"/>
</dbReference>
<dbReference type="EnsemblMetazoa" id="CQUJHB004105.R6377">
    <property type="protein sequence ID" value="CQUJHB004105.P6377"/>
    <property type="gene ID" value="CQUJHB004105"/>
</dbReference>
<dbReference type="EnsemblMetazoa" id="XM_001848102.2">
    <property type="protein sequence ID" value="XP_001848154.1"/>
    <property type="gene ID" value="LOC6038339"/>
</dbReference>
<dbReference type="GeneID" id="6038339"/>
<dbReference type="KEGG" id="cqu:CpipJ_CPIJ006763"/>
<dbReference type="CTD" id="6201"/>
<dbReference type="VEuPathDB" id="VectorBase:CPIJ006763"/>
<dbReference type="VEuPathDB" id="VectorBase:CQUJHB004105"/>
<dbReference type="eggNOG" id="KOG3320">
    <property type="taxonomic scope" value="Eukaryota"/>
</dbReference>
<dbReference type="HOGENOM" id="CLU_088621_1_2_1"/>
<dbReference type="InParanoid" id="Q9NB21"/>
<dbReference type="OMA" id="AAYHKVQ"/>
<dbReference type="OrthoDB" id="1724687at2759"/>
<dbReference type="PhylomeDB" id="Q9NB21"/>
<dbReference type="Proteomes" id="UP000002320">
    <property type="component" value="Unassembled WGS sequence"/>
</dbReference>
<dbReference type="GO" id="GO:0030686">
    <property type="term" value="C:90S preribosome"/>
    <property type="evidence" value="ECO:0007669"/>
    <property type="project" value="TreeGrafter"/>
</dbReference>
<dbReference type="GO" id="GO:0022627">
    <property type="term" value="C:cytosolic small ribosomal subunit"/>
    <property type="evidence" value="ECO:0007669"/>
    <property type="project" value="TreeGrafter"/>
</dbReference>
<dbReference type="GO" id="GO:0032040">
    <property type="term" value="C:small-subunit processome"/>
    <property type="evidence" value="ECO:0007669"/>
    <property type="project" value="TreeGrafter"/>
</dbReference>
<dbReference type="GO" id="GO:0003735">
    <property type="term" value="F:structural constituent of ribosome"/>
    <property type="evidence" value="ECO:0007669"/>
    <property type="project" value="InterPro"/>
</dbReference>
<dbReference type="GO" id="GO:0042274">
    <property type="term" value="P:ribosomal small subunit biogenesis"/>
    <property type="evidence" value="ECO:0007669"/>
    <property type="project" value="TreeGrafter"/>
</dbReference>
<dbReference type="GO" id="GO:0006364">
    <property type="term" value="P:rRNA processing"/>
    <property type="evidence" value="ECO:0007669"/>
    <property type="project" value="TreeGrafter"/>
</dbReference>
<dbReference type="GO" id="GO:0006412">
    <property type="term" value="P:translation"/>
    <property type="evidence" value="ECO:0007669"/>
    <property type="project" value="InterPro"/>
</dbReference>
<dbReference type="InterPro" id="IPR000554">
    <property type="entry name" value="Ribosomal_eS7"/>
</dbReference>
<dbReference type="InterPro" id="IPR047861">
    <property type="entry name" value="Ribosomal_eS7_CS"/>
</dbReference>
<dbReference type="PANTHER" id="PTHR11278">
    <property type="entry name" value="40S RIBOSOMAL PROTEIN S7"/>
    <property type="match status" value="1"/>
</dbReference>
<dbReference type="PANTHER" id="PTHR11278:SF0">
    <property type="entry name" value="SMALL RIBOSOMAL SUBUNIT PROTEIN ES7"/>
    <property type="match status" value="1"/>
</dbReference>
<dbReference type="Pfam" id="PF01251">
    <property type="entry name" value="Ribosomal_S7e"/>
    <property type="match status" value="1"/>
</dbReference>
<dbReference type="PROSITE" id="PS00948">
    <property type="entry name" value="RIBOSOMAL_S7E"/>
    <property type="match status" value="1"/>
</dbReference>
<comment type="similarity">
    <text evidence="1">Belongs to the eukaryotic ribosomal protein eS7 family.</text>
</comment>
<feature type="chain" id="PRO_0000174199" description="Small ribosomal subunit protein eS7">
    <location>
        <begin position="1"/>
        <end position="192"/>
    </location>
</feature>
<organism>
    <name type="scientific">Culex quinquefasciatus</name>
    <name type="common">Southern house mosquito</name>
    <name type="synonym">Culex pungens</name>
    <dbReference type="NCBI Taxonomy" id="7176"/>
    <lineage>
        <taxon>Eukaryota</taxon>
        <taxon>Metazoa</taxon>
        <taxon>Ecdysozoa</taxon>
        <taxon>Arthropoda</taxon>
        <taxon>Hexapoda</taxon>
        <taxon>Insecta</taxon>
        <taxon>Pterygota</taxon>
        <taxon>Neoptera</taxon>
        <taxon>Endopterygota</taxon>
        <taxon>Diptera</taxon>
        <taxon>Nematocera</taxon>
        <taxon>Culicoidea</taxon>
        <taxon>Culicidae</taxon>
        <taxon>Culicinae</taxon>
        <taxon>Culicini</taxon>
        <taxon>Culex</taxon>
        <taxon>Culex</taxon>
    </lineage>
</organism>